<comment type="function">
    <text evidence="1">Involved in urease metallocenter assembly. Binds nickel. Probably functions as a nickel donor during metallocenter assembly.</text>
</comment>
<comment type="subcellular location">
    <subcellularLocation>
        <location evidence="1">Cytoplasm</location>
    </subcellularLocation>
</comment>
<comment type="similarity">
    <text evidence="1">Belongs to the UreE family.</text>
</comment>
<comment type="sequence caution" evidence="3">
    <conflict type="erroneous initiation">
        <sequence resource="EMBL-CDS" id="AAK88135"/>
    </conflict>
</comment>
<sequence length="161" mass="18242">MLRVTSYHPAGTPGDEPSGYVTLAHDQRHLRRKLLHLQNDEMVMLDLKEAVLFAHGDLLVVENGDLIEVRAADEKLFEIKAKDRLHLIELAWHLGNRHLAAQIEEERILILRDHVIRAMLEGLGATVRDVEEPFQPARGAYHAHGGHSHDHGQGHHHHDHG</sequence>
<reference key="1">
    <citation type="journal article" date="2001" name="Science">
        <title>The genome of the natural genetic engineer Agrobacterium tumefaciens C58.</title>
        <authorList>
            <person name="Wood D.W."/>
            <person name="Setubal J.C."/>
            <person name="Kaul R."/>
            <person name="Monks D.E."/>
            <person name="Kitajima J.P."/>
            <person name="Okura V.K."/>
            <person name="Zhou Y."/>
            <person name="Chen L."/>
            <person name="Wood G.E."/>
            <person name="Almeida N.F. Jr."/>
            <person name="Woo L."/>
            <person name="Chen Y."/>
            <person name="Paulsen I.T."/>
            <person name="Eisen J.A."/>
            <person name="Karp P.D."/>
            <person name="Bovee D. Sr."/>
            <person name="Chapman P."/>
            <person name="Clendenning J."/>
            <person name="Deatherage G."/>
            <person name="Gillet W."/>
            <person name="Grant C."/>
            <person name="Kutyavin T."/>
            <person name="Levy R."/>
            <person name="Li M.-J."/>
            <person name="McClelland E."/>
            <person name="Palmieri A."/>
            <person name="Raymond C."/>
            <person name="Rouse G."/>
            <person name="Saenphimmachak C."/>
            <person name="Wu Z."/>
            <person name="Romero P."/>
            <person name="Gordon D."/>
            <person name="Zhang S."/>
            <person name="Yoo H."/>
            <person name="Tao Y."/>
            <person name="Biddle P."/>
            <person name="Jung M."/>
            <person name="Krespan W."/>
            <person name="Perry M."/>
            <person name="Gordon-Kamm B."/>
            <person name="Liao L."/>
            <person name="Kim S."/>
            <person name="Hendrick C."/>
            <person name="Zhao Z.-Y."/>
            <person name="Dolan M."/>
            <person name="Chumley F."/>
            <person name="Tingey S.V."/>
            <person name="Tomb J.-F."/>
            <person name="Gordon M.P."/>
            <person name="Olson M.V."/>
            <person name="Nester E.W."/>
        </authorList>
    </citation>
    <scope>NUCLEOTIDE SEQUENCE [LARGE SCALE GENOMIC DNA]</scope>
    <source>
        <strain>C58 / ATCC 33970</strain>
    </source>
</reference>
<reference key="2">
    <citation type="journal article" date="2001" name="Science">
        <title>Genome sequence of the plant pathogen and biotechnology agent Agrobacterium tumefaciens C58.</title>
        <authorList>
            <person name="Goodner B."/>
            <person name="Hinkle G."/>
            <person name="Gattung S."/>
            <person name="Miller N."/>
            <person name="Blanchard M."/>
            <person name="Qurollo B."/>
            <person name="Goldman B.S."/>
            <person name="Cao Y."/>
            <person name="Askenazi M."/>
            <person name="Halling C."/>
            <person name="Mullin L."/>
            <person name="Houmiel K."/>
            <person name="Gordon J."/>
            <person name="Vaudin M."/>
            <person name="Iartchouk O."/>
            <person name="Epp A."/>
            <person name="Liu F."/>
            <person name="Wollam C."/>
            <person name="Allinger M."/>
            <person name="Doughty D."/>
            <person name="Scott C."/>
            <person name="Lappas C."/>
            <person name="Markelz B."/>
            <person name="Flanagan C."/>
            <person name="Crowell C."/>
            <person name="Gurson J."/>
            <person name="Lomo C."/>
            <person name="Sear C."/>
            <person name="Strub G."/>
            <person name="Cielo C."/>
            <person name="Slater S."/>
        </authorList>
    </citation>
    <scope>NUCLEOTIDE SEQUENCE [LARGE SCALE GENOMIC DNA]</scope>
    <source>
        <strain>C58 / ATCC 33970</strain>
    </source>
</reference>
<proteinExistence type="inferred from homology"/>
<keyword id="KW-0143">Chaperone</keyword>
<keyword id="KW-0963">Cytoplasm</keyword>
<keyword id="KW-0533">Nickel</keyword>
<keyword id="KW-0996">Nickel insertion</keyword>
<keyword id="KW-1185">Reference proteome</keyword>
<name>UREE_AGRFC</name>
<accession>Q8UCT5</accession>
<accession>Q7CX55</accession>
<dbReference type="EMBL" id="AE007869">
    <property type="protein sequence ID" value="AAK88135.2"/>
    <property type="status" value="ALT_INIT"/>
    <property type="molecule type" value="Genomic_DNA"/>
</dbReference>
<dbReference type="PIR" id="AD2871">
    <property type="entry name" value="AD2871"/>
</dbReference>
<dbReference type="PIR" id="F97647">
    <property type="entry name" value="F97647"/>
</dbReference>
<dbReference type="RefSeq" id="NP_355350.2">
    <property type="nucleotide sequence ID" value="NC_003062.2"/>
</dbReference>
<dbReference type="RefSeq" id="WP_035255861.1">
    <property type="nucleotide sequence ID" value="NC_003062.2"/>
</dbReference>
<dbReference type="SMR" id="Q8UCT5"/>
<dbReference type="STRING" id="176299.Atu2398"/>
<dbReference type="EnsemblBacteria" id="AAK88135">
    <property type="protein sequence ID" value="AAK88135"/>
    <property type="gene ID" value="Atu2398"/>
</dbReference>
<dbReference type="GeneID" id="1134436"/>
<dbReference type="KEGG" id="atu:Atu2398"/>
<dbReference type="PATRIC" id="fig|176299.10.peg.2407"/>
<dbReference type="eggNOG" id="COG2371">
    <property type="taxonomic scope" value="Bacteria"/>
</dbReference>
<dbReference type="HOGENOM" id="CLU_093757_2_0_5"/>
<dbReference type="OrthoDB" id="9802215at2"/>
<dbReference type="Proteomes" id="UP000000813">
    <property type="component" value="Chromosome circular"/>
</dbReference>
<dbReference type="GO" id="GO:0005737">
    <property type="term" value="C:cytoplasm"/>
    <property type="evidence" value="ECO:0007669"/>
    <property type="project" value="UniProtKB-SubCell"/>
</dbReference>
<dbReference type="GO" id="GO:0016151">
    <property type="term" value="F:nickel cation binding"/>
    <property type="evidence" value="ECO:0007669"/>
    <property type="project" value="UniProtKB-UniRule"/>
</dbReference>
<dbReference type="GO" id="GO:0051082">
    <property type="term" value="F:unfolded protein binding"/>
    <property type="evidence" value="ECO:0007669"/>
    <property type="project" value="UniProtKB-UniRule"/>
</dbReference>
<dbReference type="GO" id="GO:0006457">
    <property type="term" value="P:protein folding"/>
    <property type="evidence" value="ECO:0007669"/>
    <property type="project" value="InterPro"/>
</dbReference>
<dbReference type="GO" id="GO:0065003">
    <property type="term" value="P:protein-containing complex assembly"/>
    <property type="evidence" value="ECO:0007669"/>
    <property type="project" value="InterPro"/>
</dbReference>
<dbReference type="GO" id="GO:0019627">
    <property type="term" value="P:urea metabolic process"/>
    <property type="evidence" value="ECO:0007669"/>
    <property type="project" value="InterPro"/>
</dbReference>
<dbReference type="CDD" id="cd00571">
    <property type="entry name" value="UreE"/>
    <property type="match status" value="1"/>
</dbReference>
<dbReference type="Gene3D" id="2.60.260.20">
    <property type="entry name" value="Urease metallochaperone UreE, N-terminal domain"/>
    <property type="match status" value="1"/>
</dbReference>
<dbReference type="Gene3D" id="3.30.70.790">
    <property type="entry name" value="UreE, C-terminal domain"/>
    <property type="match status" value="1"/>
</dbReference>
<dbReference type="HAMAP" id="MF_00822">
    <property type="entry name" value="UreE"/>
    <property type="match status" value="1"/>
</dbReference>
<dbReference type="InterPro" id="IPR012406">
    <property type="entry name" value="UreE"/>
</dbReference>
<dbReference type="InterPro" id="IPR007864">
    <property type="entry name" value="UreE_C_dom"/>
</dbReference>
<dbReference type="InterPro" id="IPR004029">
    <property type="entry name" value="UreE_N"/>
</dbReference>
<dbReference type="InterPro" id="IPR036118">
    <property type="entry name" value="UreE_N_sf"/>
</dbReference>
<dbReference type="NCBIfam" id="NF009760">
    <property type="entry name" value="PRK13261.2-6"/>
    <property type="match status" value="1"/>
</dbReference>
<dbReference type="Pfam" id="PF05194">
    <property type="entry name" value="UreE_C"/>
    <property type="match status" value="1"/>
</dbReference>
<dbReference type="Pfam" id="PF02814">
    <property type="entry name" value="UreE_N"/>
    <property type="match status" value="1"/>
</dbReference>
<dbReference type="PIRSF" id="PIRSF036402">
    <property type="entry name" value="Ureas_acces_UreE"/>
    <property type="match status" value="1"/>
</dbReference>
<dbReference type="SMART" id="SM00988">
    <property type="entry name" value="UreE_N"/>
    <property type="match status" value="1"/>
</dbReference>
<dbReference type="SUPFAM" id="SSF69737">
    <property type="entry name" value="Urease metallochaperone UreE, C-terminal domain"/>
    <property type="match status" value="1"/>
</dbReference>
<dbReference type="SUPFAM" id="SSF69287">
    <property type="entry name" value="Urease metallochaperone UreE, N-terminal domain"/>
    <property type="match status" value="1"/>
</dbReference>
<protein>
    <recommendedName>
        <fullName evidence="1">Urease accessory protein UreE</fullName>
    </recommendedName>
</protein>
<feature type="chain" id="PRO_0000223397" description="Urease accessory protein UreE">
    <location>
        <begin position="1"/>
        <end position="161"/>
    </location>
</feature>
<feature type="region of interest" description="Disordered" evidence="2">
    <location>
        <begin position="138"/>
        <end position="161"/>
    </location>
</feature>
<organism>
    <name type="scientific">Agrobacterium fabrum (strain C58 / ATCC 33970)</name>
    <name type="common">Agrobacterium tumefaciens (strain C58)</name>
    <dbReference type="NCBI Taxonomy" id="176299"/>
    <lineage>
        <taxon>Bacteria</taxon>
        <taxon>Pseudomonadati</taxon>
        <taxon>Pseudomonadota</taxon>
        <taxon>Alphaproteobacteria</taxon>
        <taxon>Hyphomicrobiales</taxon>
        <taxon>Rhizobiaceae</taxon>
        <taxon>Rhizobium/Agrobacterium group</taxon>
        <taxon>Agrobacterium</taxon>
        <taxon>Agrobacterium tumefaciens complex</taxon>
    </lineage>
</organism>
<evidence type="ECO:0000255" key="1">
    <source>
        <dbReference type="HAMAP-Rule" id="MF_00822"/>
    </source>
</evidence>
<evidence type="ECO:0000256" key="2">
    <source>
        <dbReference type="SAM" id="MobiDB-lite"/>
    </source>
</evidence>
<evidence type="ECO:0000305" key="3"/>
<gene>
    <name evidence="1" type="primary">ureE</name>
    <name type="ordered locus">Atu2398</name>
    <name type="ORF">AGR_C_4352</name>
</gene>